<comment type="function">
    <text evidence="1">Capsid protein self-assembles to form an icosahedral capsid with a T=7 symmetry, about 69 nm in diameter, and consisting of 60 capsid proteins hexamers and 11 pentamers. The capsid encapsulates the genomic DNA.</text>
</comment>
<comment type="subunit">
    <text evidence="1">Homomultimer.</text>
</comment>
<comment type="subcellular location">
    <subcellularLocation>
        <location evidence="1">Virion</location>
    </subcellularLocation>
    <text evidence="1">Main component of the capsid.</text>
</comment>
<comment type="PTM">
    <text evidence="1">Probably cleaved by the viral protease during maturation.</text>
</comment>
<comment type="similarity">
    <text evidence="3">Belongs to the Skunalikevirus capsid protein family.</text>
</comment>
<reference key="1">
    <citation type="journal article" date="1997" name="Mol. Microbiol.">
        <title>Analysis of the DNA sequence, gene expression, origin of replication and modular structure of the Lactococcus lactis lytic bacteriophage sk1.</title>
        <authorList>
            <person name="Chandry P.S."/>
            <person name="Moore S.C."/>
            <person name="Boyce J.D."/>
            <person name="Davidson B.E."/>
            <person name="Hillier A.J."/>
        </authorList>
    </citation>
    <scope>NUCLEOTIDE SEQUENCE [LARGE SCALE GENOMIC DNA]</scope>
</reference>
<organism>
    <name type="scientific">Lactococcus phage SK1</name>
    <name type="common">Lactococcus lactis bacteriophage SK1</name>
    <dbReference type="NCBI Taxonomy" id="2905675"/>
    <lineage>
        <taxon>Viruses</taxon>
        <taxon>Duplodnaviria</taxon>
        <taxon>Heunggongvirae</taxon>
        <taxon>Uroviricota</taxon>
        <taxon>Caudoviricetes</taxon>
        <taxon>Skunavirus</taxon>
        <taxon>Skunavirus sk1</taxon>
    </lineage>
</organism>
<evidence type="ECO:0000250" key="1">
    <source>
        <dbReference type="UniProtKB" id="D3WAC5"/>
    </source>
</evidence>
<evidence type="ECO:0000255" key="2"/>
<evidence type="ECO:0000305" key="3"/>
<feature type="chain" id="PRO_0000438262" description="Capsid protein">
    <location>
        <begin position="1"/>
        <end position="393"/>
    </location>
</feature>
<feature type="coiled-coil region" evidence="2">
    <location>
        <begin position="5"/>
        <end position="69"/>
    </location>
</feature>
<proteinExistence type="inferred from homology"/>
<sequence length="393" mass="43705">MNKPDLIEKQNRLAELKENNVSLKSQISGFEVKNAIEDLPKVQELEKTLSENSIEIIKIENELNAQEEKPKGKDKMTNFIESQNAVTEFFDVLKKNSGKSEIKNAWSAKLAENGVTITDTTFQLPRKLVESINTALLNTNPVFKVFHVTNVGALLVSRSFDSANEAQVHKDGQTKTEQAATLTIDTLEPVMVYKLQSLAERVKRLQMSYSELYNLIVAELTQAIVNKIVDLALVEGDGTNGFKSIDKEADVKKIKKITTKAKSAGKTPFADAIEEAVDFVRPTAGRRYLIVKTEDRKALLDELRQATANANVRIKNDDTEIASEVGVDEIIVYTGSKALKPTVLVDQKYHIDMQDLTKVDAFEWKTNSNMILVETLTSGHVETYNAGAVITVS</sequence>
<name>CAPSD_BPLSK</name>
<organismHost>
    <name type="scientific">Lactococcus lactis</name>
    <dbReference type="NCBI Taxonomy" id="1358"/>
</organismHost>
<accession>O21874</accession>
<dbReference type="EMBL" id="AF011378">
    <property type="protein sequence ID" value="AAB70045.1"/>
    <property type="molecule type" value="Genomic_DNA"/>
</dbReference>
<dbReference type="RefSeq" id="NP_044952.1">
    <property type="nucleotide sequence ID" value="NC_001835.1"/>
</dbReference>
<dbReference type="GeneID" id="1261309"/>
<dbReference type="KEGG" id="vg:1261309"/>
<dbReference type="Proteomes" id="UP000000839">
    <property type="component" value="Genome"/>
</dbReference>
<dbReference type="GO" id="GO:0039620">
    <property type="term" value="C:T=7 icosahedral viral capsid"/>
    <property type="evidence" value="ECO:0007669"/>
    <property type="project" value="UniProtKB-KW"/>
</dbReference>
<dbReference type="InterPro" id="IPR024455">
    <property type="entry name" value="Phage_capsid"/>
</dbReference>
<dbReference type="NCBIfam" id="TIGR01554">
    <property type="entry name" value="major_cap_HK97"/>
    <property type="match status" value="1"/>
</dbReference>
<dbReference type="SUPFAM" id="SSF56563">
    <property type="entry name" value="Major capsid protein gp5"/>
    <property type="match status" value="1"/>
</dbReference>
<keyword id="KW-0167">Capsid protein</keyword>
<keyword id="KW-0175">Coiled coil</keyword>
<keyword id="KW-1185">Reference proteome</keyword>
<keyword id="KW-1145">T=7 icosahedral capsid protein</keyword>
<keyword id="KW-0946">Virion</keyword>
<protein>
    <recommendedName>
        <fullName evidence="1">Capsid protein</fullName>
    </recommendedName>
    <alternativeName>
        <fullName evidence="3">Gene product 6</fullName>
        <shortName evidence="3">gp6</shortName>
    </alternativeName>
</protein>